<sequence>MHIFDELKERGLIFQTTDEEALRKALEEGQVSYYTGYDPTADSLHLGHLVAILTSRRLQLAGHKPYALVGGATGLIGDPSFKDAERSLQTKDTVDGWVKSIQGQLSRFLDFENGENKAVMVNNYDWFGSISFIDFLRDIGKYFTVNYMMSKESVKKRIETGISYTEFAYQIMQGYDFFVLNQDHNVTLQIGGSDQWGNMTAGTELLRRKADKTGHVITVPLITDATGKKFGKSEGNAVWLNPEKTSPYEMYQFWMNVMDADAVRFLKIFTFLSLDEIEDIRKQFEAAPHERLAQKVLAREVVTLVHGEEAYKEALNITEQLFAGNIKNLSVKELKQGLRGVPNYQVQADENNNIVELLVSSGIVNSKRQAREDVQNGAIYVNGDRIQELDYVLSDADKLENELTVIRRGKKKYFVLTY</sequence>
<protein>
    <recommendedName>
        <fullName evidence="1">Tyrosine--tRNA ligase</fullName>
        <ecNumber evidence="1">6.1.1.1</ecNumber>
    </recommendedName>
    <alternativeName>
        <fullName evidence="1">Tyrosyl-tRNA synthetase</fullName>
        <shortName evidence="1">TyrRS</shortName>
    </alternativeName>
</protein>
<dbReference type="EC" id="6.1.1.1" evidence="1"/>
<dbReference type="EMBL" id="CP000410">
    <property type="protein sequence ID" value="ABJ54351.1"/>
    <property type="molecule type" value="Genomic_DNA"/>
</dbReference>
<dbReference type="RefSeq" id="WP_000546887.1">
    <property type="nucleotide sequence ID" value="NZ_JAMLJR010000012.1"/>
</dbReference>
<dbReference type="SMR" id="Q04I74"/>
<dbReference type="PaxDb" id="373153-SPD_1926"/>
<dbReference type="KEGG" id="spd:SPD_1926"/>
<dbReference type="eggNOG" id="COG0162">
    <property type="taxonomic scope" value="Bacteria"/>
</dbReference>
<dbReference type="HOGENOM" id="CLU_024003_0_3_9"/>
<dbReference type="BioCyc" id="SPNE373153:G1G6V-2070-MONOMER"/>
<dbReference type="Proteomes" id="UP000001452">
    <property type="component" value="Chromosome"/>
</dbReference>
<dbReference type="GO" id="GO:0005829">
    <property type="term" value="C:cytosol"/>
    <property type="evidence" value="ECO:0007669"/>
    <property type="project" value="TreeGrafter"/>
</dbReference>
<dbReference type="GO" id="GO:0005524">
    <property type="term" value="F:ATP binding"/>
    <property type="evidence" value="ECO:0007669"/>
    <property type="project" value="UniProtKB-UniRule"/>
</dbReference>
<dbReference type="GO" id="GO:0003723">
    <property type="term" value="F:RNA binding"/>
    <property type="evidence" value="ECO:0007669"/>
    <property type="project" value="UniProtKB-KW"/>
</dbReference>
<dbReference type="GO" id="GO:0004831">
    <property type="term" value="F:tyrosine-tRNA ligase activity"/>
    <property type="evidence" value="ECO:0007669"/>
    <property type="project" value="UniProtKB-UniRule"/>
</dbReference>
<dbReference type="GO" id="GO:0006437">
    <property type="term" value="P:tyrosyl-tRNA aminoacylation"/>
    <property type="evidence" value="ECO:0007669"/>
    <property type="project" value="UniProtKB-UniRule"/>
</dbReference>
<dbReference type="CDD" id="cd00165">
    <property type="entry name" value="S4"/>
    <property type="match status" value="1"/>
</dbReference>
<dbReference type="CDD" id="cd00805">
    <property type="entry name" value="TyrRS_core"/>
    <property type="match status" value="1"/>
</dbReference>
<dbReference type="FunFam" id="1.10.240.10:FF:000001">
    <property type="entry name" value="Tyrosine--tRNA ligase"/>
    <property type="match status" value="1"/>
</dbReference>
<dbReference type="FunFam" id="3.10.290.10:FF:000012">
    <property type="entry name" value="Tyrosine--tRNA ligase"/>
    <property type="match status" value="1"/>
</dbReference>
<dbReference type="FunFam" id="3.40.50.620:FF:000008">
    <property type="entry name" value="Tyrosine--tRNA ligase"/>
    <property type="match status" value="1"/>
</dbReference>
<dbReference type="Gene3D" id="3.40.50.620">
    <property type="entry name" value="HUPs"/>
    <property type="match status" value="1"/>
</dbReference>
<dbReference type="Gene3D" id="3.10.290.10">
    <property type="entry name" value="RNA-binding S4 domain"/>
    <property type="match status" value="1"/>
</dbReference>
<dbReference type="Gene3D" id="1.10.240.10">
    <property type="entry name" value="Tyrosyl-Transfer RNA Synthetase"/>
    <property type="match status" value="1"/>
</dbReference>
<dbReference type="HAMAP" id="MF_02006">
    <property type="entry name" value="Tyr_tRNA_synth_type1"/>
    <property type="match status" value="1"/>
</dbReference>
<dbReference type="InterPro" id="IPR001412">
    <property type="entry name" value="aa-tRNA-synth_I_CS"/>
</dbReference>
<dbReference type="InterPro" id="IPR002305">
    <property type="entry name" value="aa-tRNA-synth_Ic"/>
</dbReference>
<dbReference type="InterPro" id="IPR014729">
    <property type="entry name" value="Rossmann-like_a/b/a_fold"/>
</dbReference>
<dbReference type="InterPro" id="IPR002942">
    <property type="entry name" value="S4_RNA-bd"/>
</dbReference>
<dbReference type="InterPro" id="IPR036986">
    <property type="entry name" value="S4_RNA-bd_sf"/>
</dbReference>
<dbReference type="InterPro" id="IPR054608">
    <property type="entry name" value="SYY-like_C"/>
</dbReference>
<dbReference type="InterPro" id="IPR002307">
    <property type="entry name" value="Tyr-tRNA-ligase"/>
</dbReference>
<dbReference type="InterPro" id="IPR024088">
    <property type="entry name" value="Tyr-tRNA-ligase_bac-type"/>
</dbReference>
<dbReference type="InterPro" id="IPR024107">
    <property type="entry name" value="Tyr-tRNA-ligase_bac_1"/>
</dbReference>
<dbReference type="NCBIfam" id="TIGR00234">
    <property type="entry name" value="tyrS"/>
    <property type="match status" value="1"/>
</dbReference>
<dbReference type="PANTHER" id="PTHR11766:SF0">
    <property type="entry name" value="TYROSINE--TRNA LIGASE, MITOCHONDRIAL"/>
    <property type="match status" value="1"/>
</dbReference>
<dbReference type="PANTHER" id="PTHR11766">
    <property type="entry name" value="TYROSYL-TRNA SYNTHETASE"/>
    <property type="match status" value="1"/>
</dbReference>
<dbReference type="Pfam" id="PF22421">
    <property type="entry name" value="SYY_C-terminal"/>
    <property type="match status" value="1"/>
</dbReference>
<dbReference type="Pfam" id="PF00579">
    <property type="entry name" value="tRNA-synt_1b"/>
    <property type="match status" value="1"/>
</dbReference>
<dbReference type="PRINTS" id="PR01040">
    <property type="entry name" value="TRNASYNTHTYR"/>
</dbReference>
<dbReference type="SMART" id="SM00363">
    <property type="entry name" value="S4"/>
    <property type="match status" value="1"/>
</dbReference>
<dbReference type="SUPFAM" id="SSF55174">
    <property type="entry name" value="Alpha-L RNA-binding motif"/>
    <property type="match status" value="1"/>
</dbReference>
<dbReference type="SUPFAM" id="SSF52374">
    <property type="entry name" value="Nucleotidylyl transferase"/>
    <property type="match status" value="1"/>
</dbReference>
<dbReference type="PROSITE" id="PS00178">
    <property type="entry name" value="AA_TRNA_LIGASE_I"/>
    <property type="match status" value="1"/>
</dbReference>
<dbReference type="PROSITE" id="PS50889">
    <property type="entry name" value="S4"/>
    <property type="match status" value="1"/>
</dbReference>
<evidence type="ECO:0000255" key="1">
    <source>
        <dbReference type="HAMAP-Rule" id="MF_02006"/>
    </source>
</evidence>
<name>SYY_STRP2</name>
<feature type="chain" id="PRO_1000088633" description="Tyrosine--tRNA ligase">
    <location>
        <begin position="1"/>
        <end position="418"/>
    </location>
</feature>
<feature type="domain" description="S4 RNA-binding" evidence="1">
    <location>
        <begin position="352"/>
        <end position="418"/>
    </location>
</feature>
<feature type="short sequence motif" description="'HIGH' region">
    <location>
        <begin position="39"/>
        <end position="48"/>
    </location>
</feature>
<feature type="short sequence motif" description="'KMSKS' region">
    <location>
        <begin position="229"/>
        <end position="233"/>
    </location>
</feature>
<feature type="binding site" evidence="1">
    <location>
        <position position="34"/>
    </location>
    <ligand>
        <name>L-tyrosine</name>
        <dbReference type="ChEBI" id="CHEBI:58315"/>
    </ligand>
</feature>
<feature type="binding site" evidence="1">
    <location>
        <position position="169"/>
    </location>
    <ligand>
        <name>L-tyrosine</name>
        <dbReference type="ChEBI" id="CHEBI:58315"/>
    </ligand>
</feature>
<feature type="binding site" evidence="1">
    <location>
        <position position="173"/>
    </location>
    <ligand>
        <name>L-tyrosine</name>
        <dbReference type="ChEBI" id="CHEBI:58315"/>
    </ligand>
</feature>
<feature type="binding site" evidence="1">
    <location>
        <position position="232"/>
    </location>
    <ligand>
        <name>ATP</name>
        <dbReference type="ChEBI" id="CHEBI:30616"/>
    </ligand>
</feature>
<proteinExistence type="inferred from homology"/>
<comment type="function">
    <text evidence="1">Catalyzes the attachment of tyrosine to tRNA(Tyr) in a two-step reaction: tyrosine is first activated by ATP to form Tyr-AMP and then transferred to the acceptor end of tRNA(Tyr).</text>
</comment>
<comment type="catalytic activity">
    <reaction evidence="1">
        <text>tRNA(Tyr) + L-tyrosine + ATP = L-tyrosyl-tRNA(Tyr) + AMP + diphosphate + H(+)</text>
        <dbReference type="Rhea" id="RHEA:10220"/>
        <dbReference type="Rhea" id="RHEA-COMP:9706"/>
        <dbReference type="Rhea" id="RHEA-COMP:9707"/>
        <dbReference type="ChEBI" id="CHEBI:15378"/>
        <dbReference type="ChEBI" id="CHEBI:30616"/>
        <dbReference type="ChEBI" id="CHEBI:33019"/>
        <dbReference type="ChEBI" id="CHEBI:58315"/>
        <dbReference type="ChEBI" id="CHEBI:78442"/>
        <dbReference type="ChEBI" id="CHEBI:78536"/>
        <dbReference type="ChEBI" id="CHEBI:456215"/>
        <dbReference type="EC" id="6.1.1.1"/>
    </reaction>
</comment>
<comment type="subunit">
    <text evidence="1">Homodimer.</text>
</comment>
<comment type="subcellular location">
    <subcellularLocation>
        <location evidence="1">Cytoplasm</location>
    </subcellularLocation>
</comment>
<comment type="similarity">
    <text evidence="1">Belongs to the class-I aminoacyl-tRNA synthetase family. TyrS type 1 subfamily.</text>
</comment>
<organism>
    <name type="scientific">Streptococcus pneumoniae serotype 2 (strain D39 / NCTC 7466)</name>
    <dbReference type="NCBI Taxonomy" id="373153"/>
    <lineage>
        <taxon>Bacteria</taxon>
        <taxon>Bacillati</taxon>
        <taxon>Bacillota</taxon>
        <taxon>Bacilli</taxon>
        <taxon>Lactobacillales</taxon>
        <taxon>Streptococcaceae</taxon>
        <taxon>Streptococcus</taxon>
    </lineage>
</organism>
<keyword id="KW-0030">Aminoacyl-tRNA synthetase</keyword>
<keyword id="KW-0067">ATP-binding</keyword>
<keyword id="KW-0963">Cytoplasm</keyword>
<keyword id="KW-0436">Ligase</keyword>
<keyword id="KW-0547">Nucleotide-binding</keyword>
<keyword id="KW-0648">Protein biosynthesis</keyword>
<keyword id="KW-1185">Reference proteome</keyword>
<keyword id="KW-0694">RNA-binding</keyword>
<reference key="1">
    <citation type="journal article" date="2007" name="J. Bacteriol.">
        <title>Genome sequence of Avery's virulent serotype 2 strain D39 of Streptococcus pneumoniae and comparison with that of unencapsulated laboratory strain R6.</title>
        <authorList>
            <person name="Lanie J.A."/>
            <person name="Ng W.-L."/>
            <person name="Kazmierczak K.M."/>
            <person name="Andrzejewski T.M."/>
            <person name="Davidsen T.M."/>
            <person name="Wayne K.J."/>
            <person name="Tettelin H."/>
            <person name="Glass J.I."/>
            <person name="Winkler M.E."/>
        </authorList>
    </citation>
    <scope>NUCLEOTIDE SEQUENCE [LARGE SCALE GENOMIC DNA]</scope>
    <source>
        <strain>D39 / NCTC 7466</strain>
    </source>
</reference>
<gene>
    <name evidence="1" type="primary">tyrS</name>
    <name type="ordered locus">SPD_1926</name>
</gene>
<accession>Q04I74</accession>